<proteinExistence type="inferred from homology"/>
<evidence type="ECO:0000255" key="1">
    <source>
        <dbReference type="HAMAP-Rule" id="MF_00209"/>
    </source>
</evidence>
<reference key="1">
    <citation type="journal article" date="2000" name="Nature">
        <title>The complete sequence of the mucosal pathogen Ureaplasma urealyticum.</title>
        <authorList>
            <person name="Glass J.I."/>
            <person name="Lefkowitz E.J."/>
            <person name="Glass J.S."/>
            <person name="Heiner C.R."/>
            <person name="Chen E.Y."/>
            <person name="Cassell G.H."/>
        </authorList>
    </citation>
    <scope>NUCLEOTIDE SEQUENCE [LARGE SCALE GENOMIC DNA]</scope>
    <source>
        <strain>ATCC 700970</strain>
    </source>
</reference>
<comment type="function">
    <text evidence="1">Catalyzes the hydrolysis of inorganic pyrophosphate (PPi) forming two phosphate ions.</text>
</comment>
<comment type="catalytic activity">
    <reaction evidence="1">
        <text>diphosphate + H2O = 2 phosphate + H(+)</text>
        <dbReference type="Rhea" id="RHEA:24576"/>
        <dbReference type="ChEBI" id="CHEBI:15377"/>
        <dbReference type="ChEBI" id="CHEBI:15378"/>
        <dbReference type="ChEBI" id="CHEBI:33019"/>
        <dbReference type="ChEBI" id="CHEBI:43474"/>
        <dbReference type="EC" id="3.6.1.1"/>
    </reaction>
</comment>
<comment type="cofactor">
    <cofactor evidence="1">
        <name>Mg(2+)</name>
        <dbReference type="ChEBI" id="CHEBI:18420"/>
    </cofactor>
</comment>
<comment type="subunit">
    <text evidence="1">Homohexamer.</text>
</comment>
<comment type="subcellular location">
    <subcellularLocation>
        <location evidence="1">Cytoplasm</location>
    </subcellularLocation>
</comment>
<comment type="similarity">
    <text evidence="1">Belongs to the PPase family.</text>
</comment>
<sequence>MKLNVTIEIPKNSNIKYEYDRATKEIMVDRILHGSMVYPHNYGFLKEALDYDGDELDVLVFADQAFQPGIKVPARVLGAMKMIDGGETDTKLLAVIDVDPRYKHINNFKDIPLHWLAEVQDFFENYKNLQNKKVKILGFEDEIWAQKEYEECVLLMKEYGHLKKDEFVTKMMKERPEKYIK</sequence>
<organism>
    <name type="scientific">Ureaplasma parvum serovar 3 (strain ATCC 700970)</name>
    <dbReference type="NCBI Taxonomy" id="273119"/>
    <lineage>
        <taxon>Bacteria</taxon>
        <taxon>Bacillati</taxon>
        <taxon>Mycoplasmatota</taxon>
        <taxon>Mycoplasmoidales</taxon>
        <taxon>Mycoplasmoidaceae</taxon>
        <taxon>Ureaplasma</taxon>
    </lineage>
</organism>
<dbReference type="EC" id="3.6.1.1" evidence="1"/>
<dbReference type="EMBL" id="AF222894">
    <property type="protein sequence ID" value="AAF30724.1"/>
    <property type="molecule type" value="Genomic_DNA"/>
</dbReference>
<dbReference type="RefSeq" id="WP_006688700.1">
    <property type="nucleotide sequence ID" value="NC_002162.1"/>
</dbReference>
<dbReference type="SMR" id="Q9PQH6"/>
<dbReference type="STRING" id="273119.UU315"/>
<dbReference type="EnsemblBacteria" id="AAF30724">
    <property type="protein sequence ID" value="AAF30724"/>
    <property type="gene ID" value="UU315"/>
</dbReference>
<dbReference type="GeneID" id="29672502"/>
<dbReference type="KEGG" id="uur:UU315"/>
<dbReference type="eggNOG" id="COG0221">
    <property type="taxonomic scope" value="Bacteria"/>
</dbReference>
<dbReference type="HOGENOM" id="CLU_073198_1_2_14"/>
<dbReference type="OrthoDB" id="5187599at2"/>
<dbReference type="Proteomes" id="UP000000423">
    <property type="component" value="Chromosome"/>
</dbReference>
<dbReference type="GO" id="GO:0005737">
    <property type="term" value="C:cytoplasm"/>
    <property type="evidence" value="ECO:0007669"/>
    <property type="project" value="UniProtKB-SubCell"/>
</dbReference>
<dbReference type="GO" id="GO:0004427">
    <property type="term" value="F:inorganic diphosphate phosphatase activity"/>
    <property type="evidence" value="ECO:0007669"/>
    <property type="project" value="UniProtKB-UniRule"/>
</dbReference>
<dbReference type="GO" id="GO:0000287">
    <property type="term" value="F:magnesium ion binding"/>
    <property type="evidence" value="ECO:0007669"/>
    <property type="project" value="UniProtKB-UniRule"/>
</dbReference>
<dbReference type="GO" id="GO:0006796">
    <property type="term" value="P:phosphate-containing compound metabolic process"/>
    <property type="evidence" value="ECO:0007669"/>
    <property type="project" value="InterPro"/>
</dbReference>
<dbReference type="CDD" id="cd00412">
    <property type="entry name" value="pyrophosphatase"/>
    <property type="match status" value="1"/>
</dbReference>
<dbReference type="Gene3D" id="3.90.80.10">
    <property type="entry name" value="Inorganic pyrophosphatase"/>
    <property type="match status" value="1"/>
</dbReference>
<dbReference type="HAMAP" id="MF_00209">
    <property type="entry name" value="Inorganic_PPase"/>
    <property type="match status" value="1"/>
</dbReference>
<dbReference type="InterPro" id="IPR008162">
    <property type="entry name" value="Pyrophosphatase"/>
</dbReference>
<dbReference type="InterPro" id="IPR036649">
    <property type="entry name" value="Pyrophosphatase_sf"/>
</dbReference>
<dbReference type="NCBIfam" id="NF002578">
    <property type="entry name" value="PRK02230.1"/>
    <property type="match status" value="1"/>
</dbReference>
<dbReference type="PANTHER" id="PTHR10286">
    <property type="entry name" value="INORGANIC PYROPHOSPHATASE"/>
    <property type="match status" value="1"/>
</dbReference>
<dbReference type="Pfam" id="PF00719">
    <property type="entry name" value="Pyrophosphatase"/>
    <property type="match status" value="1"/>
</dbReference>
<dbReference type="SUPFAM" id="SSF50324">
    <property type="entry name" value="Inorganic pyrophosphatase"/>
    <property type="match status" value="1"/>
</dbReference>
<dbReference type="PROSITE" id="PS00387">
    <property type="entry name" value="PPASE"/>
    <property type="match status" value="1"/>
</dbReference>
<accession>Q9PQH6</accession>
<keyword id="KW-0963">Cytoplasm</keyword>
<keyword id="KW-0378">Hydrolase</keyword>
<keyword id="KW-0460">Magnesium</keyword>
<keyword id="KW-0479">Metal-binding</keyword>
<keyword id="KW-1185">Reference proteome</keyword>
<name>IPYR_UREPA</name>
<gene>
    <name evidence="1" type="primary">ppa</name>
    <name type="ordered locus">UU315</name>
</gene>
<protein>
    <recommendedName>
        <fullName evidence="1">Inorganic pyrophosphatase</fullName>
        <ecNumber evidence="1">3.6.1.1</ecNumber>
    </recommendedName>
    <alternativeName>
        <fullName evidence="1">Pyrophosphate phospho-hydrolase</fullName>
        <shortName evidence="1">PPase</shortName>
    </alternativeName>
</protein>
<feature type="chain" id="PRO_0000137536" description="Inorganic pyrophosphatase">
    <location>
        <begin position="1"/>
        <end position="181"/>
    </location>
</feature>
<feature type="binding site" evidence="1">
    <location>
        <position position="16"/>
    </location>
    <ligand>
        <name>substrate</name>
    </ligand>
</feature>
<feature type="binding site" evidence="1">
    <location>
        <position position="30"/>
    </location>
    <ligand>
        <name>substrate</name>
    </ligand>
</feature>
<feature type="binding site" evidence="1">
    <location>
        <position position="42"/>
    </location>
    <ligand>
        <name>substrate</name>
    </ligand>
</feature>
<feature type="binding site" evidence="1">
    <location>
        <position position="52"/>
    </location>
    <ligand>
        <name>Mg(2+)</name>
        <dbReference type="ChEBI" id="CHEBI:18420"/>
        <label>1</label>
    </ligand>
</feature>
<feature type="binding site" evidence="1">
    <location>
        <position position="57"/>
    </location>
    <ligand>
        <name>Mg(2+)</name>
        <dbReference type="ChEBI" id="CHEBI:18420"/>
        <label>1</label>
    </ligand>
</feature>
<feature type="binding site" evidence="1">
    <location>
        <position position="57"/>
    </location>
    <ligand>
        <name>Mg(2+)</name>
        <dbReference type="ChEBI" id="CHEBI:18420"/>
        <label>2</label>
    </ligand>
</feature>
<feature type="binding site" evidence="1">
    <location>
        <position position="89"/>
    </location>
    <ligand>
        <name>Mg(2+)</name>
        <dbReference type="ChEBI" id="CHEBI:18420"/>
        <label>1</label>
    </ligand>
</feature>
<feature type="binding site" evidence="1">
    <location>
        <position position="126"/>
    </location>
    <ligand>
        <name>substrate</name>
    </ligand>
</feature>